<proteinExistence type="inferred from homology"/>
<evidence type="ECO:0000255" key="1">
    <source>
        <dbReference type="HAMAP-Rule" id="MF_00607"/>
    </source>
</evidence>
<name>RSMA_STAA2</name>
<sequence>MLDNKDIATPSRTRALLDKYGFNFKKSLGQNFLIDVNIINNIIDASDIDAQTGVIEIGPGMGSLTEQLARHAKRVLAFEIDQRLIPVLNDTLSPYDNVTVINEDILKANIKEAVENHLQDCEKIMVVANLPYYITTPILLNLMQQDIPIDGYVVMMQKEVGERLNAEVGSKAYGSLSIVVQYYTETSKVLTVPKSVFMPPPNVDSIVVKLMQRTEPLVTVDNEEAFFKLAKAAFAQRRKTINNNYQNYFKDGKQHKEVILQWLEQAGIDPRRRGETLSIQDFAKLYEEKKKFPQLEN</sequence>
<dbReference type="EC" id="2.1.1.182" evidence="1"/>
<dbReference type="EMBL" id="CP000736">
    <property type="protein sequence ID" value="ABR51385.1"/>
    <property type="molecule type" value="Genomic_DNA"/>
</dbReference>
<dbReference type="SMR" id="A6TYW7"/>
<dbReference type="KEGG" id="sah:SaurJH1_0527"/>
<dbReference type="HOGENOM" id="CLU_041220_0_0_9"/>
<dbReference type="GO" id="GO:0005829">
    <property type="term" value="C:cytosol"/>
    <property type="evidence" value="ECO:0007669"/>
    <property type="project" value="TreeGrafter"/>
</dbReference>
<dbReference type="GO" id="GO:0052908">
    <property type="term" value="F:16S rRNA (adenine(1518)-N(6)/adenine(1519)-N(6))-dimethyltransferase activity"/>
    <property type="evidence" value="ECO:0007669"/>
    <property type="project" value="UniProtKB-EC"/>
</dbReference>
<dbReference type="GO" id="GO:0003723">
    <property type="term" value="F:RNA binding"/>
    <property type="evidence" value="ECO:0007669"/>
    <property type="project" value="UniProtKB-KW"/>
</dbReference>
<dbReference type="CDD" id="cd02440">
    <property type="entry name" value="AdoMet_MTases"/>
    <property type="match status" value="1"/>
</dbReference>
<dbReference type="FunFam" id="1.10.8.100:FF:000002">
    <property type="entry name" value="Ribosomal RNA small subunit methyltransferase A"/>
    <property type="match status" value="1"/>
</dbReference>
<dbReference type="FunFam" id="3.40.50.150:FF:000023">
    <property type="entry name" value="Ribosomal RNA small subunit methyltransferase A"/>
    <property type="match status" value="1"/>
</dbReference>
<dbReference type="Gene3D" id="1.10.8.100">
    <property type="entry name" value="Ribosomal RNA adenine dimethylase-like, domain 2"/>
    <property type="match status" value="1"/>
</dbReference>
<dbReference type="Gene3D" id="3.40.50.150">
    <property type="entry name" value="Vaccinia Virus protein VP39"/>
    <property type="match status" value="1"/>
</dbReference>
<dbReference type="HAMAP" id="MF_00607">
    <property type="entry name" value="16SrRNA_methyltr_A"/>
    <property type="match status" value="1"/>
</dbReference>
<dbReference type="InterPro" id="IPR001737">
    <property type="entry name" value="KsgA/Erm"/>
</dbReference>
<dbReference type="InterPro" id="IPR023165">
    <property type="entry name" value="rRNA_Ade_diMease-like_C"/>
</dbReference>
<dbReference type="InterPro" id="IPR020596">
    <property type="entry name" value="rRNA_Ade_Mease_Trfase_CS"/>
</dbReference>
<dbReference type="InterPro" id="IPR020598">
    <property type="entry name" value="rRNA_Ade_methylase_Trfase_N"/>
</dbReference>
<dbReference type="InterPro" id="IPR011530">
    <property type="entry name" value="rRNA_adenine_dimethylase"/>
</dbReference>
<dbReference type="InterPro" id="IPR029063">
    <property type="entry name" value="SAM-dependent_MTases_sf"/>
</dbReference>
<dbReference type="NCBIfam" id="TIGR00755">
    <property type="entry name" value="ksgA"/>
    <property type="match status" value="1"/>
</dbReference>
<dbReference type="PANTHER" id="PTHR11727">
    <property type="entry name" value="DIMETHYLADENOSINE TRANSFERASE"/>
    <property type="match status" value="1"/>
</dbReference>
<dbReference type="PANTHER" id="PTHR11727:SF7">
    <property type="entry name" value="DIMETHYLADENOSINE TRANSFERASE-RELATED"/>
    <property type="match status" value="1"/>
</dbReference>
<dbReference type="Pfam" id="PF00398">
    <property type="entry name" value="RrnaAD"/>
    <property type="match status" value="1"/>
</dbReference>
<dbReference type="SMART" id="SM00650">
    <property type="entry name" value="rADc"/>
    <property type="match status" value="1"/>
</dbReference>
<dbReference type="SUPFAM" id="SSF53335">
    <property type="entry name" value="S-adenosyl-L-methionine-dependent methyltransferases"/>
    <property type="match status" value="1"/>
</dbReference>
<dbReference type="PROSITE" id="PS01131">
    <property type="entry name" value="RRNA_A_DIMETH"/>
    <property type="match status" value="1"/>
</dbReference>
<dbReference type="PROSITE" id="PS51689">
    <property type="entry name" value="SAM_RNA_A_N6_MT"/>
    <property type="match status" value="1"/>
</dbReference>
<organism>
    <name type="scientific">Staphylococcus aureus (strain JH1)</name>
    <dbReference type="NCBI Taxonomy" id="359787"/>
    <lineage>
        <taxon>Bacteria</taxon>
        <taxon>Bacillati</taxon>
        <taxon>Bacillota</taxon>
        <taxon>Bacilli</taxon>
        <taxon>Bacillales</taxon>
        <taxon>Staphylococcaceae</taxon>
        <taxon>Staphylococcus</taxon>
    </lineage>
</organism>
<protein>
    <recommendedName>
        <fullName evidence="1">Ribosomal RNA small subunit methyltransferase A</fullName>
        <ecNumber evidence="1">2.1.1.182</ecNumber>
    </recommendedName>
    <alternativeName>
        <fullName evidence="1">16S rRNA (adenine(1518)-N(6)/adenine(1519)-N(6))-dimethyltransferase</fullName>
    </alternativeName>
    <alternativeName>
        <fullName evidence="1">16S rRNA dimethyladenosine transferase</fullName>
    </alternativeName>
    <alternativeName>
        <fullName evidence="1">16S rRNA dimethylase</fullName>
    </alternativeName>
    <alternativeName>
        <fullName evidence="1">S-adenosylmethionine-6-N', N'-adenosyl(rRNA) dimethyltransferase</fullName>
    </alternativeName>
</protein>
<keyword id="KW-0963">Cytoplasm</keyword>
<keyword id="KW-0489">Methyltransferase</keyword>
<keyword id="KW-0694">RNA-binding</keyword>
<keyword id="KW-0698">rRNA processing</keyword>
<keyword id="KW-0949">S-adenosyl-L-methionine</keyword>
<keyword id="KW-0808">Transferase</keyword>
<comment type="function">
    <text evidence="1">Specifically dimethylates two adjacent adenosines (A1518 and A1519) in the loop of a conserved hairpin near the 3'-end of 16S rRNA in the 30S particle. May play a critical role in biogenesis of 30S subunits.</text>
</comment>
<comment type="catalytic activity">
    <reaction evidence="1">
        <text>adenosine(1518)/adenosine(1519) in 16S rRNA + 4 S-adenosyl-L-methionine = N(6)-dimethyladenosine(1518)/N(6)-dimethyladenosine(1519) in 16S rRNA + 4 S-adenosyl-L-homocysteine + 4 H(+)</text>
        <dbReference type="Rhea" id="RHEA:19609"/>
        <dbReference type="Rhea" id="RHEA-COMP:10232"/>
        <dbReference type="Rhea" id="RHEA-COMP:10233"/>
        <dbReference type="ChEBI" id="CHEBI:15378"/>
        <dbReference type="ChEBI" id="CHEBI:57856"/>
        <dbReference type="ChEBI" id="CHEBI:59789"/>
        <dbReference type="ChEBI" id="CHEBI:74411"/>
        <dbReference type="ChEBI" id="CHEBI:74493"/>
        <dbReference type="EC" id="2.1.1.182"/>
    </reaction>
</comment>
<comment type="subcellular location">
    <subcellularLocation>
        <location evidence="1">Cytoplasm</location>
    </subcellularLocation>
</comment>
<comment type="similarity">
    <text evidence="1">Belongs to the class I-like SAM-binding methyltransferase superfamily. rRNA adenine N(6)-methyltransferase family. RsmA subfamily.</text>
</comment>
<reference key="1">
    <citation type="submission" date="2007-06" db="EMBL/GenBank/DDBJ databases">
        <title>Complete sequence of chromosome of Staphylococcus aureus subsp. aureus JH1.</title>
        <authorList>
            <consortium name="US DOE Joint Genome Institute"/>
            <person name="Copeland A."/>
            <person name="Lucas S."/>
            <person name="Lapidus A."/>
            <person name="Barry K."/>
            <person name="Detter J.C."/>
            <person name="Glavina del Rio T."/>
            <person name="Hammon N."/>
            <person name="Israni S."/>
            <person name="Dalin E."/>
            <person name="Tice H."/>
            <person name="Pitluck S."/>
            <person name="Chain P."/>
            <person name="Malfatti S."/>
            <person name="Shin M."/>
            <person name="Vergez L."/>
            <person name="Schmutz J."/>
            <person name="Larimer F."/>
            <person name="Land M."/>
            <person name="Hauser L."/>
            <person name="Kyrpides N."/>
            <person name="Ivanova N."/>
            <person name="Tomasz A."/>
            <person name="Richardson P."/>
        </authorList>
    </citation>
    <scope>NUCLEOTIDE SEQUENCE [LARGE SCALE GENOMIC DNA]</scope>
    <source>
        <strain>JH1</strain>
    </source>
</reference>
<gene>
    <name evidence="1" type="primary">rsmA</name>
    <name evidence="1" type="synonym">ksgA</name>
    <name type="ordered locus">SaurJH1_0527</name>
</gene>
<accession>A6TYW7</accession>
<feature type="chain" id="PRO_1000082564" description="Ribosomal RNA small subunit methyltransferase A">
    <location>
        <begin position="1"/>
        <end position="297"/>
    </location>
</feature>
<feature type="binding site" evidence="1">
    <location>
        <position position="31"/>
    </location>
    <ligand>
        <name>S-adenosyl-L-methionine</name>
        <dbReference type="ChEBI" id="CHEBI:59789"/>
    </ligand>
</feature>
<feature type="binding site" evidence="1">
    <location>
        <position position="33"/>
    </location>
    <ligand>
        <name>S-adenosyl-L-methionine</name>
        <dbReference type="ChEBI" id="CHEBI:59789"/>
    </ligand>
</feature>
<feature type="binding site" evidence="1">
    <location>
        <position position="58"/>
    </location>
    <ligand>
        <name>S-adenosyl-L-methionine</name>
        <dbReference type="ChEBI" id="CHEBI:59789"/>
    </ligand>
</feature>
<feature type="binding site" evidence="1">
    <location>
        <position position="79"/>
    </location>
    <ligand>
        <name>S-adenosyl-L-methionine</name>
        <dbReference type="ChEBI" id="CHEBI:59789"/>
    </ligand>
</feature>
<feature type="binding site" evidence="1">
    <location>
        <position position="104"/>
    </location>
    <ligand>
        <name>S-adenosyl-L-methionine</name>
        <dbReference type="ChEBI" id="CHEBI:59789"/>
    </ligand>
</feature>
<feature type="binding site" evidence="1">
    <location>
        <position position="129"/>
    </location>
    <ligand>
        <name>S-adenosyl-L-methionine</name>
        <dbReference type="ChEBI" id="CHEBI:59789"/>
    </ligand>
</feature>